<dbReference type="EMBL" id="AC006439">
    <property type="protein sequence ID" value="AAD15514.1"/>
    <property type="status" value="ALT_SEQ"/>
    <property type="molecule type" value="Genomic_DNA"/>
</dbReference>
<dbReference type="EMBL" id="CP002685">
    <property type="protein sequence ID" value="AEC06741.1"/>
    <property type="molecule type" value="Genomic_DNA"/>
</dbReference>
<dbReference type="PIR" id="G84561">
    <property type="entry name" value="G84561"/>
</dbReference>
<dbReference type="RefSeq" id="NP_179414.2">
    <property type="nucleotide sequence ID" value="NM_127379.3"/>
</dbReference>
<dbReference type="SMR" id="Q9ZPV5"/>
<dbReference type="BioGRID" id="1694">
    <property type="interactions" value="1"/>
</dbReference>
<dbReference type="FunCoup" id="Q9ZPV5">
    <property type="interactions" value="3669"/>
</dbReference>
<dbReference type="STRING" id="3702.Q9ZPV5"/>
<dbReference type="iPTMnet" id="Q9ZPV5"/>
<dbReference type="PaxDb" id="3702-AT2G18220.1"/>
<dbReference type="ProteomicsDB" id="250845"/>
<dbReference type="EnsemblPlants" id="AT2G18220.1">
    <property type="protein sequence ID" value="AT2G18220.1"/>
    <property type="gene ID" value="AT2G18220"/>
</dbReference>
<dbReference type="GeneID" id="816337"/>
<dbReference type="Gramene" id="AT2G18220.1">
    <property type="protein sequence ID" value="AT2G18220.1"/>
    <property type="gene ID" value="AT2G18220"/>
</dbReference>
<dbReference type="KEGG" id="ath:AT2G18220"/>
<dbReference type="Araport" id="AT2G18220"/>
<dbReference type="TAIR" id="AT2G18220">
    <property type="gene designation" value="NOC2"/>
</dbReference>
<dbReference type="eggNOG" id="KOG2256">
    <property type="taxonomic scope" value="Eukaryota"/>
</dbReference>
<dbReference type="HOGENOM" id="CLU_011272_2_0_1"/>
<dbReference type="InParanoid" id="Q9ZPV5"/>
<dbReference type="OMA" id="GCLRYYL"/>
<dbReference type="OrthoDB" id="10266662at2759"/>
<dbReference type="CD-CODE" id="4299E36E">
    <property type="entry name" value="Nucleolus"/>
</dbReference>
<dbReference type="PRO" id="PR:Q9ZPV5"/>
<dbReference type="Proteomes" id="UP000006548">
    <property type="component" value="Chromosome 2"/>
</dbReference>
<dbReference type="ExpressionAtlas" id="Q9ZPV5">
    <property type="expression patterns" value="baseline and differential"/>
</dbReference>
<dbReference type="GO" id="GO:0005730">
    <property type="term" value="C:nucleolus"/>
    <property type="evidence" value="ECO:0000314"/>
    <property type="project" value="UniProtKB"/>
</dbReference>
<dbReference type="GO" id="GO:0005654">
    <property type="term" value="C:nucleoplasm"/>
    <property type="evidence" value="ECO:0000314"/>
    <property type="project" value="UniProtKB"/>
</dbReference>
<dbReference type="GO" id="GO:0042802">
    <property type="term" value="F:identical protein binding"/>
    <property type="evidence" value="ECO:0000314"/>
    <property type="project" value="UniProtKB"/>
</dbReference>
<dbReference type="GO" id="GO:0042803">
    <property type="term" value="F:protein homodimerization activity"/>
    <property type="evidence" value="ECO:0000314"/>
    <property type="project" value="UniProtKB"/>
</dbReference>
<dbReference type="InterPro" id="IPR005343">
    <property type="entry name" value="Noc2"/>
</dbReference>
<dbReference type="PANTHER" id="PTHR12687">
    <property type="entry name" value="NUCLEOLAR COMPLEX 2 AND RAD4-RELATED"/>
    <property type="match status" value="1"/>
</dbReference>
<dbReference type="PANTHER" id="PTHR12687:SF4">
    <property type="entry name" value="NUCLEOLAR COMPLEX PROTEIN 2 HOMOLOG"/>
    <property type="match status" value="1"/>
</dbReference>
<dbReference type="Pfam" id="PF03715">
    <property type="entry name" value="Noc2"/>
    <property type="match status" value="1"/>
</dbReference>
<proteinExistence type="evidence at protein level"/>
<sequence>MGAKDDKKRVKKLKSKKLEAEEELNNVQEIDAHDIVMEQKSDKKRGKKVKSKKAEAEEHEEELKRLQEKDPDFFQYMKEHDAELLKFDATEIEDDADVEPDTDLEDTEKEGDDEATKMEIAKKVHVQKTITASMVDAWSKSIEDEAKLGGVRSILRAYRTACHYGDDTGDDQSTKFSVMSSEVFNKIMIYVLSEMDGILRKLLRFPEDTRGTKETILELTNTRPWKNYNHLVKSYLGNSLHVLNQMTDTEMITFTLRRLKHSSVFLAAFPSLLRKYIKVALHFWGTGSGALPVVSLLFLRDLCIRLGSDCVDDCFKGMYKAYVLNCQFVNADKLKHISFLGNCFIELLGTDISAAYQHAFVFIRQLAMILREALNTKTKEAFRKVYQWKFIHCLELWTGAVCAYSSQSELRPVAYPLAQIITGVARLVPTARYTPLRLRCVRMLNRLAAATGTFIPVSMLLVDMLEMKELNRPPTGGVGKGVDLRTLLKVSKPAVKTRAFQEACVYTVVEELVEHLSQWSCSVAFFELSFIPTIRLRSFCKSTKAERFRKEMKQLISQIEANSEFVNKKRALIKFLPNDLAAESFLEDEKKAGKTPLLQYAEIIRQRAQQRNESLVESDVIVGENSAVFGKNAPSSDDEDDEDRMEKGAAAFNSSWLPGSDSKEKEPEEEKTKKKKRKRGGKSKTEKKQDEQGLGEDDVVEDFVLSSDEEEEDLFDIGGDKDEDDAVDEIADPETKTSKKTKGTYKTWHKAYKKTKKKKARVAS</sequence>
<name>NOC2_ARATH</name>
<gene>
    <name evidence="7" type="primary">NOC2</name>
    <name evidence="9" type="ordered locus">At2g18220</name>
    <name evidence="10" type="ORF">T30D6.27</name>
</gene>
<accession>Q9ZPV5</accession>
<accession>F4IQG7</accession>
<protein>
    <recommendedName>
        <fullName evidence="7">Nucleolar complex-associated protein 2</fullName>
        <shortName evidence="7">AtNOC2</shortName>
    </recommendedName>
</protein>
<evidence type="ECO:0000255" key="1"/>
<evidence type="ECO:0000255" key="2">
    <source>
        <dbReference type="PROSITE-ProRule" id="PRU00768"/>
    </source>
</evidence>
<evidence type="ECO:0000256" key="3">
    <source>
        <dbReference type="SAM" id="MobiDB-lite"/>
    </source>
</evidence>
<evidence type="ECO:0000269" key="4">
    <source>
    </source>
</evidence>
<evidence type="ECO:0000269" key="5">
    <source>
    </source>
</evidence>
<evidence type="ECO:0000303" key="6">
    <source>
    </source>
</evidence>
<evidence type="ECO:0000303" key="7">
    <source>
    </source>
</evidence>
<evidence type="ECO:0000305" key="8"/>
<evidence type="ECO:0000312" key="9">
    <source>
        <dbReference type="Araport" id="AT2G18220"/>
    </source>
</evidence>
<evidence type="ECO:0000312" key="10">
    <source>
        <dbReference type="EMBL" id="AAD15514.1"/>
    </source>
</evidence>
<keyword id="KW-0175">Coiled coil</keyword>
<keyword id="KW-0539">Nucleus</keyword>
<keyword id="KW-1185">Reference proteome</keyword>
<organism>
    <name type="scientific">Arabidopsis thaliana</name>
    <name type="common">Mouse-ear cress</name>
    <dbReference type="NCBI Taxonomy" id="3702"/>
    <lineage>
        <taxon>Eukaryota</taxon>
        <taxon>Viridiplantae</taxon>
        <taxon>Streptophyta</taxon>
        <taxon>Embryophyta</taxon>
        <taxon>Tracheophyta</taxon>
        <taxon>Spermatophyta</taxon>
        <taxon>Magnoliopsida</taxon>
        <taxon>eudicotyledons</taxon>
        <taxon>Gunneridae</taxon>
        <taxon>Pentapetalae</taxon>
        <taxon>rosids</taxon>
        <taxon>malvids</taxon>
        <taxon>Brassicales</taxon>
        <taxon>Brassicaceae</taxon>
        <taxon>Camelineae</taxon>
        <taxon>Arabidopsis</taxon>
    </lineage>
</organism>
<reference key="1">
    <citation type="journal article" date="1999" name="Nature">
        <title>Sequence and analysis of chromosome 2 of the plant Arabidopsis thaliana.</title>
        <authorList>
            <person name="Lin X."/>
            <person name="Kaul S."/>
            <person name="Rounsley S.D."/>
            <person name="Shea T.P."/>
            <person name="Benito M.-I."/>
            <person name="Town C.D."/>
            <person name="Fujii C.Y."/>
            <person name="Mason T.M."/>
            <person name="Bowman C.L."/>
            <person name="Barnstead M.E."/>
            <person name="Feldblyum T.V."/>
            <person name="Buell C.R."/>
            <person name="Ketchum K.A."/>
            <person name="Lee J.J."/>
            <person name="Ronning C.M."/>
            <person name="Koo H.L."/>
            <person name="Moffat K.S."/>
            <person name="Cronin L.A."/>
            <person name="Shen M."/>
            <person name="Pai G."/>
            <person name="Van Aken S."/>
            <person name="Umayam L."/>
            <person name="Tallon L.J."/>
            <person name="Gill J.E."/>
            <person name="Adams M.D."/>
            <person name="Carrera A.J."/>
            <person name="Creasy T.H."/>
            <person name="Goodman H.M."/>
            <person name="Somerville C.R."/>
            <person name="Copenhaver G.P."/>
            <person name="Preuss D."/>
            <person name="Nierman W.C."/>
            <person name="White O."/>
            <person name="Eisen J.A."/>
            <person name="Salzberg S.L."/>
            <person name="Fraser C.M."/>
            <person name="Venter J.C."/>
        </authorList>
    </citation>
    <scope>NUCLEOTIDE SEQUENCE [LARGE SCALE GENOMIC DNA]</scope>
    <source>
        <strain>cv. Columbia</strain>
    </source>
</reference>
<reference key="2">
    <citation type="journal article" date="2017" name="Plant J.">
        <title>Araport11: a complete reannotation of the Arabidopsis thaliana reference genome.</title>
        <authorList>
            <person name="Cheng C.Y."/>
            <person name="Krishnakumar V."/>
            <person name="Chan A.P."/>
            <person name="Thibaud-Nissen F."/>
            <person name="Schobel S."/>
            <person name="Town C.D."/>
        </authorList>
    </citation>
    <scope>GENOME REANNOTATION</scope>
    <source>
        <strain>cv. Columbia</strain>
    </source>
</reference>
<reference key="3">
    <citation type="journal article" date="2009" name="Plant Physiol.">
        <title>SLOW WALKER2, a NOC1/MAK21 homologue, is essential for coordinated cell cycle progression during female gametophyte development in Arabidopsis.</title>
        <authorList>
            <person name="Li N."/>
            <person name="Yuan L."/>
            <person name="Liu N."/>
            <person name="Shi D."/>
            <person name="Li X."/>
            <person name="Tang Z."/>
            <person name="Liu J."/>
            <person name="Sundaresan V."/>
            <person name="Yang W.-C."/>
        </authorList>
    </citation>
    <scope>FUNCTION</scope>
    <scope>INTERACTION WITH SWA2</scope>
    <source>
        <strain>cv. Landsberg erecta</strain>
    </source>
</reference>
<reference key="4">
    <citation type="journal article" date="2018" name="FEBS Open Bio">
        <title>REBELOTE, a regulator of floral determinacy in Arabidopsis thaliana, interacts with both nucleolar and nucleoplasmic proteins.</title>
        <authorList>
            <person name="de Bossoreille S."/>
            <person name="Morel P."/>
            <person name="Trehin C."/>
            <person name="Negrutiu I."/>
        </authorList>
    </citation>
    <scope>INTERACTION WITH RBL; NOC3 AND SWA2</scope>
    <scope>SUBCELLULAR LOCATION</scope>
</reference>
<feature type="chain" id="PRO_0000121052" description="Nucleolar complex-associated protein 2">
    <location>
        <begin position="1"/>
        <end position="764"/>
    </location>
</feature>
<feature type="region of interest" description="Disordered" evidence="3">
    <location>
        <begin position="23"/>
        <end position="67"/>
    </location>
</feature>
<feature type="region of interest" description="Disordered" evidence="3">
    <location>
        <begin position="89"/>
        <end position="113"/>
    </location>
</feature>
<feature type="region of interest" description="Disordered" evidence="3">
    <location>
        <begin position="627"/>
        <end position="646"/>
    </location>
</feature>
<feature type="region of interest" description="Disordered" evidence="3">
    <location>
        <begin position="651"/>
        <end position="726"/>
    </location>
</feature>
<feature type="coiled-coil region" evidence="1">
    <location>
        <begin position="3"/>
        <end position="69"/>
    </location>
</feature>
<feature type="short sequence motif" description="Nuclear localization signal 1" evidence="2">
    <location>
        <begin position="673"/>
        <end position="680"/>
    </location>
</feature>
<feature type="short sequence motif" description="Nuclear localization signal 2" evidence="2">
    <location>
        <begin position="738"/>
        <end position="745"/>
    </location>
</feature>
<feature type="compositionally biased region" description="Basic and acidic residues" evidence="3">
    <location>
        <begin position="30"/>
        <end position="41"/>
    </location>
</feature>
<feature type="compositionally biased region" description="Basic residues" evidence="3">
    <location>
        <begin position="42"/>
        <end position="51"/>
    </location>
</feature>
<feature type="compositionally biased region" description="Basic and acidic residues" evidence="3">
    <location>
        <begin position="52"/>
        <end position="67"/>
    </location>
</feature>
<feature type="compositionally biased region" description="Acidic residues" evidence="3">
    <location>
        <begin position="90"/>
        <end position="113"/>
    </location>
</feature>
<feature type="compositionally biased region" description="Basic and acidic residues" evidence="3">
    <location>
        <begin position="661"/>
        <end position="672"/>
    </location>
</feature>
<feature type="compositionally biased region" description="Basic residues" evidence="3">
    <location>
        <begin position="673"/>
        <end position="682"/>
    </location>
</feature>
<feature type="compositionally biased region" description="Acidic residues" evidence="3">
    <location>
        <begin position="693"/>
        <end position="726"/>
    </location>
</feature>
<comment type="function">
    <text evidence="6">Together with SWA2, probably involved in pre-ribosome export from the nucleus to the cytoplasm.</text>
</comment>
<comment type="subunit">
    <text evidence="4 5">Component of nucleolar complexes (PubMed:30338215). Forms homodimers (PubMed:30338215). Interacts with RBL and NOC3 in both the nucleolus and nucleoplasm (PubMed:30338215). Binds to SWA2 (PubMed:19734265, PubMed:30338215).</text>
</comment>
<comment type="subcellular location">
    <subcellularLocation>
        <location evidence="2">Nucleus</location>
    </subcellularLocation>
    <subcellularLocation>
        <location evidence="5">Nucleus</location>
        <location evidence="5">Nucleolus</location>
    </subcellularLocation>
    <subcellularLocation>
        <location evidence="5">Nucleus</location>
        <location evidence="5">Nucleoplasm</location>
    </subcellularLocation>
    <text evidence="5">Also observed in nucleoplasmic bodies.</text>
</comment>
<comment type="similarity">
    <text evidence="8">Belongs to the NOC2 family.</text>
</comment>
<comment type="sequence caution" evidence="8">
    <conflict type="erroneous gene model prediction">
        <sequence resource="EMBL-CDS" id="AAD15514"/>
    </conflict>
</comment>